<comment type="miscellaneous">
    <text evidence="1">Partially overlaps SCT1.</text>
</comment>
<comment type="caution">
    <text evidence="2">Product of a dubious gene prediction unlikely to encode a functional protein. Because of that it is not part of the S.cerevisiae S288c complete/reference proteome set.</text>
</comment>
<gene>
    <name type="ordered locus">YBL012C</name>
    <name type="ORF">YBL0314</name>
</gene>
<organism>
    <name type="scientific">Saccharomyces cerevisiae (strain ATCC 204508 / S288c)</name>
    <name type="common">Baker's yeast</name>
    <dbReference type="NCBI Taxonomy" id="559292"/>
    <lineage>
        <taxon>Eukaryota</taxon>
        <taxon>Fungi</taxon>
        <taxon>Dikarya</taxon>
        <taxon>Ascomycota</taxon>
        <taxon>Saccharomycotina</taxon>
        <taxon>Saccharomycetes</taxon>
        <taxon>Saccharomycetales</taxon>
        <taxon>Saccharomycetaceae</taxon>
        <taxon>Saccharomyces</taxon>
    </lineage>
</organism>
<dbReference type="EMBL" id="Z35773">
    <property type="protein sequence ID" value="CAA84830.1"/>
    <property type="molecule type" value="Genomic_DNA"/>
</dbReference>
<dbReference type="PIR" id="S45746">
    <property type="entry name" value="S45746"/>
</dbReference>
<dbReference type="IntAct" id="P38209">
    <property type="interactions" value="1"/>
</dbReference>
<dbReference type="STRING" id="4932.YBL012C"/>
<dbReference type="PaxDb" id="4932-YBL012C"/>
<dbReference type="EnsemblFungi" id="YBL012C_mRNA">
    <property type="protein sequence ID" value="YBL012C"/>
    <property type="gene ID" value="YBL012C"/>
</dbReference>
<dbReference type="AGR" id="SGD:S000000108"/>
<dbReference type="SGD" id="S000000108">
    <property type="gene designation" value="YBL012C"/>
</dbReference>
<dbReference type="HOGENOM" id="CLU_1908320_0_0_1"/>
<name>YBB2_YEAST</name>
<accession>P38209</accession>
<evidence type="ECO:0000305" key="1"/>
<evidence type="ECO:0000305" key="2">
    <source>
    </source>
</evidence>
<sequence>MRSRNKDHRSLLRYLETAPASDFSKEAVEDVVQQPCGDGVKYLLGSARLLVDVCLISRRLDAFGLDGTVIRSFLCALGRGKFLREFWCRHFFLPRCKRPCALFTIYLIPGFLHLIHSVMNYKPLLTSIFPNHK</sequence>
<reference key="1">
    <citation type="journal article" date="1992" name="Yeast">
        <title>The sequence of an 8 kb segment on the left arm of chromosome II from Saccharomyces cerevisiae identifies five new open reading frames of unknown functions, two tRNA genes and two transposable elements.</title>
        <authorList>
            <person name="Skala J."/>
            <person name="van Dyck L."/>
            <person name="Purnelle B."/>
            <person name="Goffeau A."/>
        </authorList>
    </citation>
    <scope>NUCLEOTIDE SEQUENCE [GENOMIC DNA]</scope>
    <source>
        <strain>ATCC 204508 / S288c</strain>
    </source>
</reference>
<reference key="2">
    <citation type="journal article" date="1994" name="EMBO J.">
        <title>Complete DNA sequence of yeast chromosome II.</title>
        <authorList>
            <person name="Feldmann H."/>
            <person name="Aigle M."/>
            <person name="Aljinovic G."/>
            <person name="Andre B."/>
            <person name="Baclet M.C."/>
            <person name="Barthe C."/>
            <person name="Baur A."/>
            <person name="Becam A.-M."/>
            <person name="Biteau N."/>
            <person name="Boles E."/>
            <person name="Brandt T."/>
            <person name="Brendel M."/>
            <person name="Brueckner M."/>
            <person name="Bussereau F."/>
            <person name="Christiansen C."/>
            <person name="Contreras R."/>
            <person name="Crouzet M."/>
            <person name="Cziepluch C."/>
            <person name="Demolis N."/>
            <person name="Delaveau T."/>
            <person name="Doignon F."/>
            <person name="Domdey H."/>
            <person name="Duesterhus S."/>
            <person name="Dubois E."/>
            <person name="Dujon B."/>
            <person name="El Bakkoury M."/>
            <person name="Entian K.-D."/>
            <person name="Feuermann M."/>
            <person name="Fiers W."/>
            <person name="Fobo G.M."/>
            <person name="Fritz C."/>
            <person name="Gassenhuber J."/>
            <person name="Glansdorff N."/>
            <person name="Goffeau A."/>
            <person name="Grivell L.A."/>
            <person name="de Haan M."/>
            <person name="Hein C."/>
            <person name="Herbert C.J."/>
            <person name="Hollenberg C.P."/>
            <person name="Holmstroem K."/>
            <person name="Jacq C."/>
            <person name="Jacquet M."/>
            <person name="Jauniaux J.-C."/>
            <person name="Jonniaux J.-L."/>
            <person name="Kallesoee T."/>
            <person name="Kiesau P."/>
            <person name="Kirchrath L."/>
            <person name="Koetter P."/>
            <person name="Korol S."/>
            <person name="Liebl S."/>
            <person name="Logghe M."/>
            <person name="Lohan A.J.E."/>
            <person name="Louis E.J."/>
            <person name="Li Z.Y."/>
            <person name="Maat M.J."/>
            <person name="Mallet L."/>
            <person name="Mannhaupt G."/>
            <person name="Messenguy F."/>
            <person name="Miosga T."/>
            <person name="Molemans F."/>
            <person name="Mueller S."/>
            <person name="Nasr F."/>
            <person name="Obermaier B."/>
            <person name="Perea J."/>
            <person name="Pierard A."/>
            <person name="Piravandi E."/>
            <person name="Pohl F.M."/>
            <person name="Pohl T.M."/>
            <person name="Potier S."/>
            <person name="Proft M."/>
            <person name="Purnelle B."/>
            <person name="Ramezani Rad M."/>
            <person name="Rieger M."/>
            <person name="Rose M."/>
            <person name="Schaaff-Gerstenschlaeger I."/>
            <person name="Scherens B."/>
            <person name="Schwarzlose C."/>
            <person name="Skala J."/>
            <person name="Slonimski P.P."/>
            <person name="Smits P.H.M."/>
            <person name="Souciet J.-L."/>
            <person name="Steensma H.Y."/>
            <person name="Stucka R."/>
            <person name="Urrestarazu L.A."/>
            <person name="van der Aart Q.J.M."/>
            <person name="Van Dyck L."/>
            <person name="Vassarotti A."/>
            <person name="Vetter I."/>
            <person name="Vierendeels F."/>
            <person name="Vissers S."/>
            <person name="Wagner G."/>
            <person name="de Wergifosse P."/>
            <person name="Wolfe K.H."/>
            <person name="Zagulski M."/>
            <person name="Zimmermann F.K."/>
            <person name="Mewes H.-W."/>
            <person name="Kleine K."/>
        </authorList>
    </citation>
    <scope>NUCLEOTIDE SEQUENCE [LARGE SCALE GENOMIC DNA]</scope>
    <source>
        <strain>ATCC 204508 / S288c</strain>
    </source>
</reference>
<reference key="3">
    <citation type="journal article" date="2014" name="G3 (Bethesda)">
        <title>The reference genome sequence of Saccharomyces cerevisiae: Then and now.</title>
        <authorList>
            <person name="Engel S.R."/>
            <person name="Dietrich F.S."/>
            <person name="Fisk D.G."/>
            <person name="Binkley G."/>
            <person name="Balakrishnan R."/>
            <person name="Costanzo M.C."/>
            <person name="Dwight S.S."/>
            <person name="Hitz B.C."/>
            <person name="Karra K."/>
            <person name="Nash R.S."/>
            <person name="Weng S."/>
            <person name="Wong E.D."/>
            <person name="Lloyd P."/>
            <person name="Skrzypek M.S."/>
            <person name="Miyasato S.R."/>
            <person name="Simison M."/>
            <person name="Cherry J.M."/>
        </authorList>
    </citation>
    <scope>GENOME REANNOTATION</scope>
    <source>
        <strain>ATCC 204508 / S288c</strain>
    </source>
</reference>
<protein>
    <recommendedName>
        <fullName>Putative uncharacterized protein YBL012C</fullName>
    </recommendedName>
</protein>
<feature type="chain" id="PRO_0000202463" description="Putative uncharacterized protein YBL012C">
    <location>
        <begin position="1"/>
        <end position="133"/>
    </location>
</feature>
<proteinExistence type="uncertain"/>